<gene>
    <name evidence="1" type="primary">rpmH</name>
    <name type="ordered locus">Ssed_0005</name>
</gene>
<reference key="1">
    <citation type="submission" date="2007-08" db="EMBL/GenBank/DDBJ databases">
        <title>Complete sequence of Shewanella sediminis HAW-EB3.</title>
        <authorList>
            <consortium name="US DOE Joint Genome Institute"/>
            <person name="Copeland A."/>
            <person name="Lucas S."/>
            <person name="Lapidus A."/>
            <person name="Barry K."/>
            <person name="Glavina del Rio T."/>
            <person name="Dalin E."/>
            <person name="Tice H."/>
            <person name="Pitluck S."/>
            <person name="Chertkov O."/>
            <person name="Brettin T."/>
            <person name="Bruce D."/>
            <person name="Detter J.C."/>
            <person name="Han C."/>
            <person name="Schmutz J."/>
            <person name="Larimer F."/>
            <person name="Land M."/>
            <person name="Hauser L."/>
            <person name="Kyrpides N."/>
            <person name="Kim E."/>
            <person name="Zhao J.-S."/>
            <person name="Richardson P."/>
        </authorList>
    </citation>
    <scope>NUCLEOTIDE SEQUENCE [LARGE SCALE GENOMIC DNA]</scope>
    <source>
        <strain>HAW-EB3</strain>
    </source>
</reference>
<feature type="chain" id="PRO_1000080270" description="Large ribosomal subunit protein bL34">
    <location>
        <begin position="1"/>
        <end position="45"/>
    </location>
</feature>
<feature type="region of interest" description="Disordered" evidence="2">
    <location>
        <begin position="1"/>
        <end position="21"/>
    </location>
</feature>
<feature type="compositionally biased region" description="Polar residues" evidence="2">
    <location>
        <begin position="1"/>
        <end position="10"/>
    </location>
</feature>
<feature type="compositionally biased region" description="Basic residues" evidence="2">
    <location>
        <begin position="11"/>
        <end position="20"/>
    </location>
</feature>
<evidence type="ECO:0000255" key="1">
    <source>
        <dbReference type="HAMAP-Rule" id="MF_00391"/>
    </source>
</evidence>
<evidence type="ECO:0000256" key="2">
    <source>
        <dbReference type="SAM" id="MobiDB-lite"/>
    </source>
</evidence>
<evidence type="ECO:0000305" key="3"/>
<protein>
    <recommendedName>
        <fullName evidence="1">Large ribosomal subunit protein bL34</fullName>
    </recommendedName>
    <alternativeName>
        <fullName evidence="3">50S ribosomal protein L34</fullName>
    </alternativeName>
</protein>
<comment type="similarity">
    <text evidence="1">Belongs to the bacterial ribosomal protein bL34 family.</text>
</comment>
<sequence length="45" mass="5153">MSKRTFQPSNLKRKRSHGFRARMATVGGRKVLARRRAKGRARLSA</sequence>
<dbReference type="EMBL" id="CP000821">
    <property type="protein sequence ID" value="ABV34618.1"/>
    <property type="molecule type" value="Genomic_DNA"/>
</dbReference>
<dbReference type="RefSeq" id="WP_006083827.1">
    <property type="nucleotide sequence ID" value="NC_009831.1"/>
</dbReference>
<dbReference type="SMR" id="A8FP45"/>
<dbReference type="STRING" id="425104.Ssed_0005"/>
<dbReference type="GeneID" id="90572020"/>
<dbReference type="KEGG" id="sse:Ssed_0005"/>
<dbReference type="eggNOG" id="COG0230">
    <property type="taxonomic scope" value="Bacteria"/>
</dbReference>
<dbReference type="HOGENOM" id="CLU_129938_2_0_6"/>
<dbReference type="Proteomes" id="UP000002015">
    <property type="component" value="Chromosome"/>
</dbReference>
<dbReference type="GO" id="GO:1990904">
    <property type="term" value="C:ribonucleoprotein complex"/>
    <property type="evidence" value="ECO:0007669"/>
    <property type="project" value="UniProtKB-KW"/>
</dbReference>
<dbReference type="GO" id="GO:0005840">
    <property type="term" value="C:ribosome"/>
    <property type="evidence" value="ECO:0007669"/>
    <property type="project" value="UniProtKB-KW"/>
</dbReference>
<dbReference type="GO" id="GO:0003735">
    <property type="term" value="F:structural constituent of ribosome"/>
    <property type="evidence" value="ECO:0007669"/>
    <property type="project" value="InterPro"/>
</dbReference>
<dbReference type="GO" id="GO:0006412">
    <property type="term" value="P:translation"/>
    <property type="evidence" value="ECO:0007669"/>
    <property type="project" value="UniProtKB-UniRule"/>
</dbReference>
<dbReference type="FunFam" id="1.10.287.3980:FF:000001">
    <property type="entry name" value="Mitochondrial ribosomal protein L34"/>
    <property type="match status" value="1"/>
</dbReference>
<dbReference type="Gene3D" id="1.10.287.3980">
    <property type="match status" value="1"/>
</dbReference>
<dbReference type="HAMAP" id="MF_00391">
    <property type="entry name" value="Ribosomal_bL34"/>
    <property type="match status" value="1"/>
</dbReference>
<dbReference type="InterPro" id="IPR000271">
    <property type="entry name" value="Ribosomal_bL34"/>
</dbReference>
<dbReference type="InterPro" id="IPR020939">
    <property type="entry name" value="Ribosomal_bL34_CS"/>
</dbReference>
<dbReference type="NCBIfam" id="TIGR01030">
    <property type="entry name" value="rpmH_bact"/>
    <property type="match status" value="1"/>
</dbReference>
<dbReference type="PANTHER" id="PTHR14503:SF4">
    <property type="entry name" value="LARGE RIBOSOMAL SUBUNIT PROTEIN BL34M"/>
    <property type="match status" value="1"/>
</dbReference>
<dbReference type="PANTHER" id="PTHR14503">
    <property type="entry name" value="MITOCHONDRIAL RIBOSOMAL PROTEIN 34 FAMILY MEMBER"/>
    <property type="match status" value="1"/>
</dbReference>
<dbReference type="Pfam" id="PF00468">
    <property type="entry name" value="Ribosomal_L34"/>
    <property type="match status" value="1"/>
</dbReference>
<dbReference type="PROSITE" id="PS00784">
    <property type="entry name" value="RIBOSOMAL_L34"/>
    <property type="match status" value="1"/>
</dbReference>
<proteinExistence type="inferred from homology"/>
<keyword id="KW-1185">Reference proteome</keyword>
<keyword id="KW-0687">Ribonucleoprotein</keyword>
<keyword id="KW-0689">Ribosomal protein</keyword>
<name>RL34_SHESH</name>
<accession>A8FP45</accession>
<organism>
    <name type="scientific">Shewanella sediminis (strain HAW-EB3)</name>
    <dbReference type="NCBI Taxonomy" id="425104"/>
    <lineage>
        <taxon>Bacteria</taxon>
        <taxon>Pseudomonadati</taxon>
        <taxon>Pseudomonadota</taxon>
        <taxon>Gammaproteobacteria</taxon>
        <taxon>Alteromonadales</taxon>
        <taxon>Shewanellaceae</taxon>
        <taxon>Shewanella</taxon>
    </lineage>
</organism>